<dbReference type="EMBL" id="AE002160">
    <property type="protein sequence ID" value="AAF39515.1"/>
    <property type="molecule type" value="Genomic_DNA"/>
</dbReference>
<dbReference type="PIR" id="F81673">
    <property type="entry name" value="F81673"/>
</dbReference>
<dbReference type="RefSeq" id="WP_010231275.1">
    <property type="nucleotide sequence ID" value="NZ_CP063055.1"/>
</dbReference>
<dbReference type="SMR" id="Q9PJX5"/>
<dbReference type="GeneID" id="1246063"/>
<dbReference type="KEGG" id="cmu:TC_0701"/>
<dbReference type="eggNOG" id="COG0261">
    <property type="taxonomic scope" value="Bacteria"/>
</dbReference>
<dbReference type="HOGENOM" id="CLU_061463_3_2_0"/>
<dbReference type="OrthoDB" id="9813334at2"/>
<dbReference type="Proteomes" id="UP000000800">
    <property type="component" value="Chromosome"/>
</dbReference>
<dbReference type="GO" id="GO:0005737">
    <property type="term" value="C:cytoplasm"/>
    <property type="evidence" value="ECO:0007669"/>
    <property type="project" value="UniProtKB-ARBA"/>
</dbReference>
<dbReference type="GO" id="GO:1990904">
    <property type="term" value="C:ribonucleoprotein complex"/>
    <property type="evidence" value="ECO:0007669"/>
    <property type="project" value="UniProtKB-KW"/>
</dbReference>
<dbReference type="GO" id="GO:0005840">
    <property type="term" value="C:ribosome"/>
    <property type="evidence" value="ECO:0007669"/>
    <property type="project" value="UniProtKB-KW"/>
</dbReference>
<dbReference type="GO" id="GO:0019843">
    <property type="term" value="F:rRNA binding"/>
    <property type="evidence" value="ECO:0007669"/>
    <property type="project" value="UniProtKB-UniRule"/>
</dbReference>
<dbReference type="GO" id="GO:0003735">
    <property type="term" value="F:structural constituent of ribosome"/>
    <property type="evidence" value="ECO:0007669"/>
    <property type="project" value="InterPro"/>
</dbReference>
<dbReference type="GO" id="GO:0006412">
    <property type="term" value="P:translation"/>
    <property type="evidence" value="ECO:0007669"/>
    <property type="project" value="UniProtKB-UniRule"/>
</dbReference>
<dbReference type="HAMAP" id="MF_01363">
    <property type="entry name" value="Ribosomal_bL21"/>
    <property type="match status" value="1"/>
</dbReference>
<dbReference type="InterPro" id="IPR028909">
    <property type="entry name" value="bL21-like"/>
</dbReference>
<dbReference type="InterPro" id="IPR036164">
    <property type="entry name" value="bL21-like_sf"/>
</dbReference>
<dbReference type="InterPro" id="IPR001787">
    <property type="entry name" value="Ribosomal_bL21"/>
</dbReference>
<dbReference type="InterPro" id="IPR018258">
    <property type="entry name" value="Ribosomal_bL21_CS"/>
</dbReference>
<dbReference type="NCBIfam" id="TIGR00061">
    <property type="entry name" value="L21"/>
    <property type="match status" value="1"/>
</dbReference>
<dbReference type="PANTHER" id="PTHR21349">
    <property type="entry name" value="50S RIBOSOMAL PROTEIN L21"/>
    <property type="match status" value="1"/>
</dbReference>
<dbReference type="PANTHER" id="PTHR21349:SF0">
    <property type="entry name" value="LARGE RIBOSOMAL SUBUNIT PROTEIN BL21M"/>
    <property type="match status" value="1"/>
</dbReference>
<dbReference type="Pfam" id="PF00829">
    <property type="entry name" value="Ribosomal_L21p"/>
    <property type="match status" value="1"/>
</dbReference>
<dbReference type="SUPFAM" id="SSF141091">
    <property type="entry name" value="L21p-like"/>
    <property type="match status" value="1"/>
</dbReference>
<dbReference type="PROSITE" id="PS01169">
    <property type="entry name" value="RIBOSOMAL_L21"/>
    <property type="match status" value="1"/>
</dbReference>
<feature type="chain" id="PRO_0000180995" description="Large ribosomal subunit protein bL21">
    <location>
        <begin position="1"/>
        <end position="107"/>
    </location>
</feature>
<keyword id="KW-0687">Ribonucleoprotein</keyword>
<keyword id="KW-0689">Ribosomal protein</keyword>
<keyword id="KW-0694">RNA-binding</keyword>
<keyword id="KW-0699">rRNA-binding</keyword>
<organism>
    <name type="scientific">Chlamydia muridarum (strain MoPn / Nigg)</name>
    <dbReference type="NCBI Taxonomy" id="243161"/>
    <lineage>
        <taxon>Bacteria</taxon>
        <taxon>Pseudomonadati</taxon>
        <taxon>Chlamydiota</taxon>
        <taxon>Chlamydiia</taxon>
        <taxon>Chlamydiales</taxon>
        <taxon>Chlamydiaceae</taxon>
        <taxon>Chlamydia/Chlamydophila group</taxon>
        <taxon>Chlamydia</taxon>
    </lineage>
</organism>
<gene>
    <name evidence="1" type="primary">rplU</name>
    <name type="ordered locus">TC_0701</name>
</gene>
<protein>
    <recommendedName>
        <fullName evidence="1">Large ribosomal subunit protein bL21</fullName>
    </recommendedName>
    <alternativeName>
        <fullName evidence="2">50S ribosomal protein L21</fullName>
    </alternativeName>
</protein>
<evidence type="ECO:0000255" key="1">
    <source>
        <dbReference type="HAMAP-Rule" id="MF_01363"/>
    </source>
</evidence>
<evidence type="ECO:0000305" key="2"/>
<comment type="function">
    <text evidence="1">This protein binds to 23S rRNA in the presence of protein L20.</text>
</comment>
<comment type="subunit">
    <text evidence="1">Part of the 50S ribosomal subunit. Contacts protein L20.</text>
</comment>
<comment type="similarity">
    <text evidence="1">Belongs to the bacterial ribosomal protein bL21 family.</text>
</comment>
<reference key="1">
    <citation type="journal article" date="2000" name="Nucleic Acids Res.">
        <title>Genome sequences of Chlamydia trachomatis MoPn and Chlamydia pneumoniae AR39.</title>
        <authorList>
            <person name="Read T.D."/>
            <person name="Brunham R.C."/>
            <person name="Shen C."/>
            <person name="Gill S.R."/>
            <person name="Heidelberg J.F."/>
            <person name="White O."/>
            <person name="Hickey E.K."/>
            <person name="Peterson J.D."/>
            <person name="Utterback T.R."/>
            <person name="Berry K.J."/>
            <person name="Bass S."/>
            <person name="Linher K.D."/>
            <person name="Weidman J.F."/>
            <person name="Khouri H.M."/>
            <person name="Craven B."/>
            <person name="Bowman C."/>
            <person name="Dodson R.J."/>
            <person name="Gwinn M.L."/>
            <person name="Nelson W.C."/>
            <person name="DeBoy R.T."/>
            <person name="Kolonay J.F."/>
            <person name="McClarty G."/>
            <person name="Salzberg S.L."/>
            <person name="Eisen J.A."/>
            <person name="Fraser C.M."/>
        </authorList>
    </citation>
    <scope>NUCLEOTIDE SEQUENCE [LARGE SCALE GENOMIC DNA]</scope>
    <source>
        <strain>MoPn / Nigg</strain>
    </source>
</reference>
<name>RL21_CHLMU</name>
<proteinExistence type="inferred from homology"/>
<sequence>MEPYAVVQTGNKQYQVRKGDVIDVELLDGISEENKEVLFQEVLFVFDGEKASVGSPTVGNAVVKGELISFVRGEKVVAYKYKKRKNYHKKIGHRQNYLRVKICDLVM</sequence>
<accession>Q9PJX5</accession>